<comment type="function">
    <text evidence="1">Converts heme B (protoheme IX) to heme O by substitution of the vinyl group on carbon 2 of heme B porphyrin ring with a hydroxyethyl farnesyl side group.</text>
</comment>
<comment type="catalytic activity">
    <reaction evidence="1">
        <text>heme b + (2E,6E)-farnesyl diphosphate + H2O = Fe(II)-heme o + diphosphate</text>
        <dbReference type="Rhea" id="RHEA:28070"/>
        <dbReference type="ChEBI" id="CHEBI:15377"/>
        <dbReference type="ChEBI" id="CHEBI:33019"/>
        <dbReference type="ChEBI" id="CHEBI:60344"/>
        <dbReference type="ChEBI" id="CHEBI:60530"/>
        <dbReference type="ChEBI" id="CHEBI:175763"/>
        <dbReference type="EC" id="2.5.1.141"/>
    </reaction>
</comment>
<comment type="pathway">
    <text evidence="1">Porphyrin-containing compound metabolism; heme O biosynthesis; heme O from protoheme: step 1/1.</text>
</comment>
<comment type="subcellular location">
    <subcellularLocation>
        <location evidence="1">Cell inner membrane</location>
        <topology evidence="1">Multi-pass membrane protein</topology>
    </subcellularLocation>
</comment>
<comment type="miscellaneous">
    <text evidence="1">Carbon 2 of the heme B porphyrin ring is defined according to the Fischer nomenclature.</text>
</comment>
<comment type="similarity">
    <text evidence="1">Belongs to the UbiA prenyltransferase family. Protoheme IX farnesyltransferase subfamily.</text>
</comment>
<dbReference type="EC" id="2.5.1.141" evidence="1"/>
<dbReference type="EMBL" id="CT978603">
    <property type="protein sequence ID" value="CAK27577.1"/>
    <property type="molecule type" value="Genomic_DNA"/>
</dbReference>
<dbReference type="SMR" id="A5GRR8"/>
<dbReference type="STRING" id="316278.SynRCC307_0674"/>
<dbReference type="KEGG" id="syr:SynRCC307_0674"/>
<dbReference type="eggNOG" id="COG0109">
    <property type="taxonomic scope" value="Bacteria"/>
</dbReference>
<dbReference type="HOGENOM" id="CLU_029631_0_2_3"/>
<dbReference type="OrthoDB" id="9814417at2"/>
<dbReference type="UniPathway" id="UPA00834">
    <property type="reaction ID" value="UER00712"/>
</dbReference>
<dbReference type="Proteomes" id="UP000001115">
    <property type="component" value="Chromosome"/>
</dbReference>
<dbReference type="GO" id="GO:0005886">
    <property type="term" value="C:plasma membrane"/>
    <property type="evidence" value="ECO:0007669"/>
    <property type="project" value="UniProtKB-SubCell"/>
</dbReference>
<dbReference type="GO" id="GO:0008495">
    <property type="term" value="F:protoheme IX farnesyltransferase activity"/>
    <property type="evidence" value="ECO:0007669"/>
    <property type="project" value="UniProtKB-UniRule"/>
</dbReference>
<dbReference type="GO" id="GO:0048034">
    <property type="term" value="P:heme O biosynthetic process"/>
    <property type="evidence" value="ECO:0007669"/>
    <property type="project" value="UniProtKB-UniRule"/>
</dbReference>
<dbReference type="CDD" id="cd13957">
    <property type="entry name" value="PT_UbiA_Cox10"/>
    <property type="match status" value="1"/>
</dbReference>
<dbReference type="Gene3D" id="1.10.357.140">
    <property type="entry name" value="UbiA prenyltransferase"/>
    <property type="match status" value="1"/>
</dbReference>
<dbReference type="HAMAP" id="MF_00154">
    <property type="entry name" value="CyoE_CtaB"/>
    <property type="match status" value="1"/>
</dbReference>
<dbReference type="InterPro" id="IPR006369">
    <property type="entry name" value="Protohaem_IX_farnesylTrfase"/>
</dbReference>
<dbReference type="InterPro" id="IPR000537">
    <property type="entry name" value="UbiA_prenyltransferase"/>
</dbReference>
<dbReference type="InterPro" id="IPR030470">
    <property type="entry name" value="UbiA_prenylTrfase_CS"/>
</dbReference>
<dbReference type="InterPro" id="IPR044878">
    <property type="entry name" value="UbiA_sf"/>
</dbReference>
<dbReference type="NCBIfam" id="TIGR01473">
    <property type="entry name" value="cyoE_ctaB"/>
    <property type="match status" value="1"/>
</dbReference>
<dbReference type="NCBIfam" id="NF003349">
    <property type="entry name" value="PRK04375.1-2"/>
    <property type="match status" value="1"/>
</dbReference>
<dbReference type="PANTHER" id="PTHR43448:SF7">
    <property type="entry name" value="4-HYDROXYBENZOATE SOLANESYLTRANSFERASE"/>
    <property type="match status" value="1"/>
</dbReference>
<dbReference type="PANTHER" id="PTHR43448">
    <property type="entry name" value="PROTOHEME IX FARNESYLTRANSFERASE, MITOCHONDRIAL"/>
    <property type="match status" value="1"/>
</dbReference>
<dbReference type="Pfam" id="PF01040">
    <property type="entry name" value="UbiA"/>
    <property type="match status" value="1"/>
</dbReference>
<dbReference type="PROSITE" id="PS00943">
    <property type="entry name" value="UBIA"/>
    <property type="match status" value="1"/>
</dbReference>
<evidence type="ECO:0000255" key="1">
    <source>
        <dbReference type="HAMAP-Rule" id="MF_00154"/>
    </source>
</evidence>
<reference key="1">
    <citation type="submission" date="2006-05" db="EMBL/GenBank/DDBJ databases">
        <authorList>
            <consortium name="Genoscope"/>
        </authorList>
    </citation>
    <scope>NUCLEOTIDE SEQUENCE [LARGE SCALE GENOMIC DNA]</scope>
    <source>
        <strain>RCC307</strain>
    </source>
</reference>
<feature type="chain" id="PRO_0000327179" description="Protoheme IX farnesyltransferase">
    <location>
        <begin position="1"/>
        <end position="329"/>
    </location>
</feature>
<feature type="transmembrane region" description="Helical" evidence="1">
    <location>
        <begin position="61"/>
        <end position="81"/>
    </location>
</feature>
<feature type="transmembrane region" description="Helical" evidence="1">
    <location>
        <begin position="108"/>
        <end position="128"/>
    </location>
</feature>
<feature type="transmembrane region" description="Helical" evidence="1">
    <location>
        <begin position="130"/>
        <end position="150"/>
    </location>
</feature>
<feature type="transmembrane region" description="Helical" evidence="1">
    <location>
        <begin position="158"/>
        <end position="178"/>
    </location>
</feature>
<feature type="transmembrane region" description="Helical" evidence="1">
    <location>
        <begin position="186"/>
        <end position="206"/>
    </location>
</feature>
<feature type="transmembrane region" description="Helical" evidence="1">
    <location>
        <begin position="243"/>
        <end position="263"/>
    </location>
</feature>
<feature type="transmembrane region" description="Helical" evidence="1">
    <location>
        <begin position="284"/>
        <end position="304"/>
    </location>
</feature>
<proteinExistence type="inferred from homology"/>
<organism>
    <name type="scientific">Synechococcus sp. (strain RCC307)</name>
    <dbReference type="NCBI Taxonomy" id="316278"/>
    <lineage>
        <taxon>Bacteria</taxon>
        <taxon>Bacillati</taxon>
        <taxon>Cyanobacteriota</taxon>
        <taxon>Cyanophyceae</taxon>
        <taxon>Synechococcales</taxon>
        <taxon>Synechococcaceae</taxon>
        <taxon>Synechococcus</taxon>
    </lineage>
</organism>
<name>COXX_SYNR3</name>
<gene>
    <name evidence="1" type="primary">ctaB</name>
    <name type="ordered locus">SynRCC307_0674</name>
</gene>
<sequence length="329" mass="34723">MAEVPIAVPVSIRDEVVPSRKRVKLPPWLEIAKPRLIPLLLATTLGGMALSESWPLPLPRLACTLGGGALAAAAAGVLNCLWEEQLDGQMQRTSGRALPSGRLSGSQAFLIAVALACGASLLLVAGVNCLAAGLSLLGLCSYVLLYTIVLKPRTTRNIVIGGVAGAIPPLVGAAAATGHVGLGGWWLFGLVMLWTPAHFWALALLLTDDYRSVGIPMLPVVKGPEVTGRAINRYAYATVAASLLGVLTLPSGGLFYGLMVLPFNGRLLQMAQRLGELPDDKQRAKGLFRWSILYLFGICLLLLLARTTMAADFSNQLISLLTLPPASAF</sequence>
<keyword id="KW-0997">Cell inner membrane</keyword>
<keyword id="KW-1003">Cell membrane</keyword>
<keyword id="KW-0350">Heme biosynthesis</keyword>
<keyword id="KW-0472">Membrane</keyword>
<keyword id="KW-1185">Reference proteome</keyword>
<keyword id="KW-0808">Transferase</keyword>
<keyword id="KW-0812">Transmembrane</keyword>
<keyword id="KW-1133">Transmembrane helix</keyword>
<protein>
    <recommendedName>
        <fullName evidence="1">Protoheme IX farnesyltransferase</fullName>
        <ecNumber evidence="1">2.5.1.141</ecNumber>
    </recommendedName>
    <alternativeName>
        <fullName evidence="1">Heme B farnesyltransferase</fullName>
    </alternativeName>
    <alternativeName>
        <fullName evidence="1">Heme O synthase</fullName>
    </alternativeName>
</protein>
<accession>A5GRR8</accession>